<protein>
    <recommendedName>
        <fullName evidence="1">Large ribosomal subunit protein uL18</fullName>
    </recommendedName>
    <alternativeName>
        <fullName evidence="2">50S ribosomal protein L18</fullName>
    </alternativeName>
</protein>
<comment type="function">
    <text evidence="1">This is one of the proteins that bind and probably mediate the attachment of the 5S RNA into the large ribosomal subunit, where it forms part of the central protuberance.</text>
</comment>
<comment type="subunit">
    <text evidence="1">Part of the 50S ribosomal subunit; part of the 5S rRNA/L5/L18/L25 subcomplex. Contacts the 5S and 23S rRNAs.</text>
</comment>
<comment type="similarity">
    <text evidence="1">Belongs to the universal ribosomal protein uL18 family.</text>
</comment>
<feature type="chain" id="PRO_1000142632" description="Large ribosomal subunit protein uL18">
    <location>
        <begin position="1"/>
        <end position="121"/>
    </location>
</feature>
<accession>A9ADK9</accession>
<organism>
    <name type="scientific">Burkholderia multivorans (strain ATCC 17616 / 249)</name>
    <dbReference type="NCBI Taxonomy" id="395019"/>
    <lineage>
        <taxon>Bacteria</taxon>
        <taxon>Pseudomonadati</taxon>
        <taxon>Pseudomonadota</taxon>
        <taxon>Betaproteobacteria</taxon>
        <taxon>Burkholderiales</taxon>
        <taxon>Burkholderiaceae</taxon>
        <taxon>Burkholderia</taxon>
        <taxon>Burkholderia cepacia complex</taxon>
    </lineage>
</organism>
<gene>
    <name evidence="1" type="primary">rplR</name>
    <name type="ordered locus">Bmul_0265</name>
    <name type="ordered locus">BMULJ_02989</name>
</gene>
<sequence>MDKTQSRLRRARQTRIKIAELQVARLAVHRTNTHIYAQVFSPCGTKVLASASTLEAEVRAELADKSGKGGNVAAATLIGKRIAEKAKAAGIESVAFDRSGFRYHGRVKALAEAAREAGLKF</sequence>
<reference key="1">
    <citation type="submission" date="2007-10" db="EMBL/GenBank/DDBJ databases">
        <title>Complete sequence of chromosome 1 of Burkholderia multivorans ATCC 17616.</title>
        <authorList>
            <person name="Copeland A."/>
            <person name="Lucas S."/>
            <person name="Lapidus A."/>
            <person name="Barry K."/>
            <person name="Glavina del Rio T."/>
            <person name="Dalin E."/>
            <person name="Tice H."/>
            <person name="Pitluck S."/>
            <person name="Chain P."/>
            <person name="Malfatti S."/>
            <person name="Shin M."/>
            <person name="Vergez L."/>
            <person name="Schmutz J."/>
            <person name="Larimer F."/>
            <person name="Land M."/>
            <person name="Hauser L."/>
            <person name="Kyrpides N."/>
            <person name="Kim E."/>
            <person name="Tiedje J."/>
            <person name="Richardson P."/>
        </authorList>
    </citation>
    <scope>NUCLEOTIDE SEQUENCE [LARGE SCALE GENOMIC DNA]</scope>
    <source>
        <strain>ATCC 17616 / 249</strain>
    </source>
</reference>
<reference key="2">
    <citation type="submission" date="2007-04" db="EMBL/GenBank/DDBJ databases">
        <title>Complete genome sequence of Burkholderia multivorans ATCC 17616.</title>
        <authorList>
            <person name="Ohtsubo Y."/>
            <person name="Yamashita A."/>
            <person name="Kurokawa K."/>
            <person name="Takami H."/>
            <person name="Yuhara S."/>
            <person name="Nishiyama E."/>
            <person name="Endo R."/>
            <person name="Miyazaki R."/>
            <person name="Ono A."/>
            <person name="Yano K."/>
            <person name="Ito M."/>
            <person name="Sota M."/>
            <person name="Yuji N."/>
            <person name="Hattori M."/>
            <person name="Tsuda M."/>
        </authorList>
    </citation>
    <scope>NUCLEOTIDE SEQUENCE [LARGE SCALE GENOMIC DNA]</scope>
    <source>
        <strain>ATCC 17616 / 249</strain>
    </source>
</reference>
<evidence type="ECO:0000255" key="1">
    <source>
        <dbReference type="HAMAP-Rule" id="MF_01337"/>
    </source>
</evidence>
<evidence type="ECO:0000305" key="2"/>
<dbReference type="EMBL" id="CP000868">
    <property type="protein sequence ID" value="ABX13960.1"/>
    <property type="molecule type" value="Genomic_DNA"/>
</dbReference>
<dbReference type="EMBL" id="AP009385">
    <property type="protein sequence ID" value="BAG44874.1"/>
    <property type="molecule type" value="Genomic_DNA"/>
</dbReference>
<dbReference type="RefSeq" id="WP_006400645.1">
    <property type="nucleotide sequence ID" value="NC_010804.1"/>
</dbReference>
<dbReference type="SMR" id="A9ADK9"/>
<dbReference type="STRING" id="395019.BMULJ_02989"/>
<dbReference type="GeneID" id="93171001"/>
<dbReference type="KEGG" id="bmj:BMULJ_02989"/>
<dbReference type="KEGG" id="bmu:Bmul_0265"/>
<dbReference type="eggNOG" id="COG0256">
    <property type="taxonomic scope" value="Bacteria"/>
</dbReference>
<dbReference type="HOGENOM" id="CLU_098841_0_1_4"/>
<dbReference type="Proteomes" id="UP000008815">
    <property type="component" value="Chromosome 1"/>
</dbReference>
<dbReference type="GO" id="GO:0022625">
    <property type="term" value="C:cytosolic large ribosomal subunit"/>
    <property type="evidence" value="ECO:0007669"/>
    <property type="project" value="TreeGrafter"/>
</dbReference>
<dbReference type="GO" id="GO:0008097">
    <property type="term" value="F:5S rRNA binding"/>
    <property type="evidence" value="ECO:0007669"/>
    <property type="project" value="TreeGrafter"/>
</dbReference>
<dbReference type="GO" id="GO:0003735">
    <property type="term" value="F:structural constituent of ribosome"/>
    <property type="evidence" value="ECO:0007669"/>
    <property type="project" value="InterPro"/>
</dbReference>
<dbReference type="GO" id="GO:0006412">
    <property type="term" value="P:translation"/>
    <property type="evidence" value="ECO:0007669"/>
    <property type="project" value="UniProtKB-UniRule"/>
</dbReference>
<dbReference type="CDD" id="cd00432">
    <property type="entry name" value="Ribosomal_L18_L5e"/>
    <property type="match status" value="1"/>
</dbReference>
<dbReference type="FunFam" id="3.30.420.100:FF:000001">
    <property type="entry name" value="50S ribosomal protein L18"/>
    <property type="match status" value="1"/>
</dbReference>
<dbReference type="Gene3D" id="3.30.420.100">
    <property type="match status" value="1"/>
</dbReference>
<dbReference type="HAMAP" id="MF_01337_B">
    <property type="entry name" value="Ribosomal_uL18_B"/>
    <property type="match status" value="1"/>
</dbReference>
<dbReference type="InterPro" id="IPR004389">
    <property type="entry name" value="Ribosomal_uL18_bac-type"/>
</dbReference>
<dbReference type="InterPro" id="IPR005484">
    <property type="entry name" value="Ribosomal_uL18_bac/euk"/>
</dbReference>
<dbReference type="NCBIfam" id="TIGR00060">
    <property type="entry name" value="L18_bact"/>
    <property type="match status" value="1"/>
</dbReference>
<dbReference type="PANTHER" id="PTHR12899">
    <property type="entry name" value="39S RIBOSOMAL PROTEIN L18, MITOCHONDRIAL"/>
    <property type="match status" value="1"/>
</dbReference>
<dbReference type="PANTHER" id="PTHR12899:SF3">
    <property type="entry name" value="LARGE RIBOSOMAL SUBUNIT PROTEIN UL18M"/>
    <property type="match status" value="1"/>
</dbReference>
<dbReference type="Pfam" id="PF00861">
    <property type="entry name" value="Ribosomal_L18p"/>
    <property type="match status" value="1"/>
</dbReference>
<dbReference type="SUPFAM" id="SSF53137">
    <property type="entry name" value="Translational machinery components"/>
    <property type="match status" value="1"/>
</dbReference>
<keyword id="KW-1185">Reference proteome</keyword>
<keyword id="KW-0687">Ribonucleoprotein</keyword>
<keyword id="KW-0689">Ribosomal protein</keyword>
<keyword id="KW-0694">RNA-binding</keyword>
<keyword id="KW-0699">rRNA-binding</keyword>
<name>RL18_BURM1</name>
<proteinExistence type="inferred from homology"/>